<proteinExistence type="inferred from homology"/>
<protein>
    <recommendedName>
        <fullName evidence="1">Protease HtpX homolog</fullName>
        <ecNumber evidence="1">3.4.24.-</ecNumber>
    </recommendedName>
</protein>
<name>HTPX_BACP2</name>
<accession>A8FCF7</accession>
<feature type="chain" id="PRO_1000058461" description="Protease HtpX homolog">
    <location>
        <begin position="1"/>
        <end position="299"/>
    </location>
</feature>
<feature type="transmembrane region" description="Helical" evidence="1">
    <location>
        <begin position="5"/>
        <end position="25"/>
    </location>
</feature>
<feature type="transmembrane region" description="Helical" evidence="1">
    <location>
        <begin position="44"/>
        <end position="64"/>
    </location>
</feature>
<feature type="transmembrane region" description="Helical" evidence="1">
    <location>
        <begin position="170"/>
        <end position="190"/>
    </location>
</feature>
<feature type="transmembrane region" description="Helical" evidence="1">
    <location>
        <begin position="205"/>
        <end position="225"/>
    </location>
</feature>
<feature type="active site" evidence="1">
    <location>
        <position position="156"/>
    </location>
</feature>
<feature type="binding site" evidence="1">
    <location>
        <position position="155"/>
    </location>
    <ligand>
        <name>Zn(2+)</name>
        <dbReference type="ChEBI" id="CHEBI:29105"/>
        <note>catalytic</note>
    </ligand>
</feature>
<feature type="binding site" evidence="1">
    <location>
        <position position="159"/>
    </location>
    <ligand>
        <name>Zn(2+)</name>
        <dbReference type="ChEBI" id="CHEBI:29105"/>
        <note>catalytic</note>
    </ligand>
</feature>
<feature type="binding site" evidence="1">
    <location>
        <position position="231"/>
    </location>
    <ligand>
        <name>Zn(2+)</name>
        <dbReference type="ChEBI" id="CHEBI:29105"/>
        <note>catalytic</note>
    </ligand>
</feature>
<gene>
    <name evidence="1" type="primary">htpX</name>
    <name type="ordered locus">BPUM_1241</name>
</gene>
<reference key="1">
    <citation type="journal article" date="2007" name="PLoS ONE">
        <title>Paradoxical DNA repair and peroxide resistance gene conservation in Bacillus pumilus SAFR-032.</title>
        <authorList>
            <person name="Gioia J."/>
            <person name="Yerrapragada S."/>
            <person name="Qin X."/>
            <person name="Jiang H."/>
            <person name="Igboeli O.C."/>
            <person name="Muzny D."/>
            <person name="Dugan-Rocha S."/>
            <person name="Ding Y."/>
            <person name="Hawes A."/>
            <person name="Liu W."/>
            <person name="Perez L."/>
            <person name="Kovar C."/>
            <person name="Dinh H."/>
            <person name="Lee S."/>
            <person name="Nazareth L."/>
            <person name="Blyth P."/>
            <person name="Holder M."/>
            <person name="Buhay C."/>
            <person name="Tirumalai M.R."/>
            <person name="Liu Y."/>
            <person name="Dasgupta I."/>
            <person name="Bokhetache L."/>
            <person name="Fujita M."/>
            <person name="Karouia F."/>
            <person name="Eswara Moorthy P."/>
            <person name="Siefert J."/>
            <person name="Uzman A."/>
            <person name="Buzumbo P."/>
            <person name="Verma A."/>
            <person name="Zwiya H."/>
            <person name="McWilliams B.D."/>
            <person name="Olowu A."/>
            <person name="Clinkenbeard K.D."/>
            <person name="Newcombe D."/>
            <person name="Golebiewski L."/>
            <person name="Petrosino J.F."/>
            <person name="Nicholson W.L."/>
            <person name="Fox G.E."/>
            <person name="Venkateswaran K."/>
            <person name="Highlander S.K."/>
            <person name="Weinstock G.M."/>
        </authorList>
    </citation>
    <scope>NUCLEOTIDE SEQUENCE [LARGE SCALE GENOMIC DNA]</scope>
    <source>
        <strain>SAFR-032</strain>
    </source>
</reference>
<keyword id="KW-1003">Cell membrane</keyword>
<keyword id="KW-0378">Hydrolase</keyword>
<keyword id="KW-0472">Membrane</keyword>
<keyword id="KW-0479">Metal-binding</keyword>
<keyword id="KW-0482">Metalloprotease</keyword>
<keyword id="KW-0645">Protease</keyword>
<keyword id="KW-0812">Transmembrane</keyword>
<keyword id="KW-1133">Transmembrane helix</keyword>
<keyword id="KW-0862">Zinc</keyword>
<evidence type="ECO:0000255" key="1">
    <source>
        <dbReference type="HAMAP-Rule" id="MF_00188"/>
    </source>
</evidence>
<organism>
    <name type="scientific">Bacillus pumilus (strain SAFR-032)</name>
    <dbReference type="NCBI Taxonomy" id="315750"/>
    <lineage>
        <taxon>Bacteria</taxon>
        <taxon>Bacillati</taxon>
        <taxon>Bacillota</taxon>
        <taxon>Bacilli</taxon>
        <taxon>Bacillales</taxon>
        <taxon>Bacillaceae</taxon>
        <taxon>Bacillus</taxon>
    </lineage>
</organism>
<dbReference type="EC" id="3.4.24.-" evidence="1"/>
<dbReference type="EMBL" id="CP000813">
    <property type="protein sequence ID" value="ABV61924.1"/>
    <property type="molecule type" value="Genomic_DNA"/>
</dbReference>
<dbReference type="RefSeq" id="WP_012009724.1">
    <property type="nucleotide sequence ID" value="NC_009848.4"/>
</dbReference>
<dbReference type="SMR" id="A8FCF7"/>
<dbReference type="STRING" id="315750.BPUM_1241"/>
<dbReference type="GeneID" id="5620504"/>
<dbReference type="KEGG" id="bpu:BPUM_1241"/>
<dbReference type="eggNOG" id="COG0501">
    <property type="taxonomic scope" value="Bacteria"/>
</dbReference>
<dbReference type="HOGENOM" id="CLU_042266_1_0_9"/>
<dbReference type="OrthoDB" id="15218at2"/>
<dbReference type="Proteomes" id="UP000001355">
    <property type="component" value="Chromosome"/>
</dbReference>
<dbReference type="GO" id="GO:0005886">
    <property type="term" value="C:plasma membrane"/>
    <property type="evidence" value="ECO:0007669"/>
    <property type="project" value="UniProtKB-SubCell"/>
</dbReference>
<dbReference type="GO" id="GO:0004222">
    <property type="term" value="F:metalloendopeptidase activity"/>
    <property type="evidence" value="ECO:0007669"/>
    <property type="project" value="UniProtKB-UniRule"/>
</dbReference>
<dbReference type="GO" id="GO:0008270">
    <property type="term" value="F:zinc ion binding"/>
    <property type="evidence" value="ECO:0007669"/>
    <property type="project" value="UniProtKB-UniRule"/>
</dbReference>
<dbReference type="GO" id="GO:0006508">
    <property type="term" value="P:proteolysis"/>
    <property type="evidence" value="ECO:0007669"/>
    <property type="project" value="UniProtKB-KW"/>
</dbReference>
<dbReference type="CDD" id="cd07335">
    <property type="entry name" value="M48B_HtpX_like"/>
    <property type="match status" value="1"/>
</dbReference>
<dbReference type="Gene3D" id="3.30.2010.10">
    <property type="entry name" value="Metalloproteases ('zincins'), catalytic domain"/>
    <property type="match status" value="1"/>
</dbReference>
<dbReference type="HAMAP" id="MF_00188">
    <property type="entry name" value="Pept_M48_protease_HtpX"/>
    <property type="match status" value="1"/>
</dbReference>
<dbReference type="InterPro" id="IPR050083">
    <property type="entry name" value="HtpX_protease"/>
</dbReference>
<dbReference type="InterPro" id="IPR022919">
    <property type="entry name" value="Pept_M48_protease_HtpX"/>
</dbReference>
<dbReference type="InterPro" id="IPR001915">
    <property type="entry name" value="Peptidase_M48"/>
</dbReference>
<dbReference type="NCBIfam" id="NF003965">
    <property type="entry name" value="PRK05457.1"/>
    <property type="match status" value="1"/>
</dbReference>
<dbReference type="PANTHER" id="PTHR43221">
    <property type="entry name" value="PROTEASE HTPX"/>
    <property type="match status" value="1"/>
</dbReference>
<dbReference type="PANTHER" id="PTHR43221:SF1">
    <property type="entry name" value="PROTEASE HTPX"/>
    <property type="match status" value="1"/>
</dbReference>
<dbReference type="Pfam" id="PF01435">
    <property type="entry name" value="Peptidase_M48"/>
    <property type="match status" value="1"/>
</dbReference>
<comment type="cofactor">
    <cofactor evidence="1">
        <name>Zn(2+)</name>
        <dbReference type="ChEBI" id="CHEBI:29105"/>
    </cofactor>
    <text evidence="1">Binds 1 zinc ion per subunit.</text>
</comment>
<comment type="subcellular location">
    <subcellularLocation>
        <location evidence="1">Cell membrane</location>
        <topology evidence="1">Multi-pass membrane protein</topology>
    </subcellularLocation>
</comment>
<comment type="similarity">
    <text evidence="1">Belongs to the peptidase M48B family.</text>
</comment>
<sequence length="299" mass="32696">MGKRIFLFILTNILVITTIGIVLSVISAATGVGSYIGADGRISMVALLVFSAVVGFVGSFMSLAMSRWMAKMMMGVRVLNPEKDSLTYDEQQLVDRVHRLSRAAGLSKMPEVGIYQSSEVNAFATGPSKRRSLVAVSTGLLHEMDDAAVEGVIAHEVAHVANGDMVTMTLLQGIVNTFVVFLSRIAAWIASRFVSREELVPIVHFIAVIVFQIIFSVLGSLVVFAYSRHREFHADRGGADLAGKDKMVHALRSLEAYTSRIKDDDQTAVATLKISGKRKASLFSTHPDLNERIRRLEAK</sequence>